<evidence type="ECO:0000250" key="1"/>
<evidence type="ECO:0000269" key="2">
    <source>
    </source>
</evidence>
<evidence type="ECO:0000269" key="3">
    <source>
    </source>
</evidence>
<evidence type="ECO:0000269" key="4">
    <source>
    </source>
</evidence>
<accession>Q9LW29</accession>
<keyword id="KW-0927">Auxin signaling pathway</keyword>
<keyword id="KW-0217">Developmental protein</keyword>
<keyword id="KW-0539">Nucleus</keyword>
<keyword id="KW-0611">Plant defense</keyword>
<keyword id="KW-1185">Reference proteome</keyword>
<keyword id="KW-0833">Ubl conjugation pathway</keyword>
<gene>
    <name type="primary">AFB2</name>
    <name type="synonym">LRF2</name>
    <name type="ordered locus">At3g26810</name>
    <name type="ORF">MDJ14.12</name>
</gene>
<name>AFB2_ARATH</name>
<organism>
    <name type="scientific">Arabidopsis thaliana</name>
    <name type="common">Mouse-ear cress</name>
    <dbReference type="NCBI Taxonomy" id="3702"/>
    <lineage>
        <taxon>Eukaryota</taxon>
        <taxon>Viridiplantae</taxon>
        <taxon>Streptophyta</taxon>
        <taxon>Embryophyta</taxon>
        <taxon>Tracheophyta</taxon>
        <taxon>Spermatophyta</taxon>
        <taxon>Magnoliopsida</taxon>
        <taxon>eudicotyledons</taxon>
        <taxon>Gunneridae</taxon>
        <taxon>Pentapetalae</taxon>
        <taxon>rosids</taxon>
        <taxon>malvids</taxon>
        <taxon>Brassicales</taxon>
        <taxon>Brassicaceae</taxon>
        <taxon>Camelineae</taxon>
        <taxon>Arabidopsis</taxon>
    </lineage>
</organism>
<proteinExistence type="evidence at protein level"/>
<feature type="chain" id="PRO_0000272243" description="Protein AUXIN SIGNALING F-BOX 2">
    <location>
        <begin position="1"/>
        <end position="575"/>
    </location>
</feature>
<feature type="domain" description="F-box">
    <location>
        <begin position="1"/>
        <end position="47"/>
    </location>
</feature>
<feature type="region of interest" description="Interaction with auxin-responsive proteins" evidence="1">
    <location>
        <begin position="76"/>
        <end position="77"/>
    </location>
</feature>
<feature type="region of interest" description="Interaction with auxin-responsive proteins" evidence="1">
    <location>
        <begin position="343"/>
        <end position="348"/>
    </location>
</feature>
<feature type="region of interest" description="Interaction with auxin-responsive proteins" evidence="1">
    <location>
        <begin position="400"/>
        <end position="404"/>
    </location>
</feature>
<feature type="region of interest" description="Interaction with auxin-responsive proteins" evidence="1">
    <location>
        <begin position="459"/>
        <end position="460"/>
    </location>
</feature>
<feature type="binding site" evidence="1">
    <location>
        <position position="69"/>
    </location>
    <ligand>
        <name>1D-myo-inositol hexakisphosphate</name>
        <dbReference type="ChEBI" id="CHEBI:58130"/>
    </ligand>
</feature>
<feature type="binding site" evidence="1">
    <location>
        <begin position="108"/>
        <end position="109"/>
    </location>
    <ligand>
        <name>1D-myo-inositol hexakisphosphate</name>
        <dbReference type="ChEBI" id="CHEBI:58130"/>
    </ligand>
</feature>
<feature type="binding site" evidence="1">
    <location>
        <position position="340"/>
    </location>
    <ligand>
        <name>1D-myo-inositol hexakisphosphate</name>
        <dbReference type="ChEBI" id="CHEBI:58130"/>
    </ligand>
</feature>
<feature type="binding site" evidence="1">
    <location>
        <begin position="396"/>
        <end position="398"/>
    </location>
    <ligand>
        <name>1D-myo-inositol hexakisphosphate</name>
        <dbReference type="ChEBI" id="CHEBI:58130"/>
    </ligand>
</feature>
<feature type="binding site" evidence="1">
    <location>
        <position position="431"/>
    </location>
    <ligand>
        <name>1D-myo-inositol hexakisphosphate</name>
        <dbReference type="ChEBI" id="CHEBI:58130"/>
    </ligand>
</feature>
<feature type="binding site" evidence="1">
    <location>
        <begin position="479"/>
        <end position="480"/>
    </location>
    <ligand>
        <name>1D-myo-inositol hexakisphosphate</name>
        <dbReference type="ChEBI" id="CHEBI:58130"/>
    </ligand>
</feature>
<feature type="binding site" evidence="1">
    <location>
        <position position="504"/>
    </location>
    <ligand>
        <name>1D-myo-inositol hexakisphosphate</name>
        <dbReference type="ChEBI" id="CHEBI:58130"/>
    </ligand>
</feature>
<feature type="site" description="Interaction with auxin-responsive proteins" evidence="1">
    <location>
        <position position="134"/>
    </location>
</feature>
<feature type="site" description="Interaction with auxin-responsive proteins" evidence="1">
    <location>
        <position position="160"/>
    </location>
</feature>
<feature type="site" description="Interaction with auxin-responsive proteins" evidence="1">
    <location>
        <position position="375"/>
    </location>
</feature>
<feature type="site" description="Interaction with auxin-responsive proteins" evidence="1">
    <location>
        <position position="484"/>
    </location>
</feature>
<comment type="function">
    <text evidence="1 2 3 4">Component of SCF(ASK-cullin-F-box) E3 ubiquitin ligase complexes, which may mediate the ubiquitination and subsequent proteasomal degradation of target proteins. Confers sensitivity to the virulent bacterial pathogen P.syringae (By similarity). Auxin receptor that mediates Aux/IAA proteins proteasomal degradation and auxin-regulated transcription. Involved in embryogenesis regulation by auxin.</text>
</comment>
<comment type="pathway">
    <text>Protein modification; protein ubiquitination.</text>
</comment>
<comment type="subunit">
    <text evidence="1 3">Part of a SCF (SKP1-cullin-F-box) protein ligase complex (By similarity). Interacts with Aux/IAA proteins (IAA7) in an auxin-dependent manner.</text>
</comment>
<comment type="interaction">
    <interactant intactId="EBI-617556">
        <id>Q9LW29</id>
    </interactant>
    <interactant intactId="EBI-602959">
        <id>Q38825</id>
        <label>IAA7</label>
    </interactant>
    <organismsDiffer>false</organismsDiffer>
    <experiments>2</experiments>
</comment>
<comment type="subcellular location">
    <subcellularLocation>
        <location evidence="3">Nucleus</location>
    </subcellularLocation>
</comment>
<comment type="tissue specificity">
    <text evidence="3">Ubiquitous, with higher levels in seedlings.</text>
</comment>
<comment type="induction">
    <text evidence="4">Repressed by miR393a (microRNA) in response to flg-22 (flagellin-derived peptide 22).</text>
</comment>
<comment type="domain">
    <text evidence="1">The F-box is necessary for the interaction with SKP1.</text>
</comment>
<protein>
    <recommendedName>
        <fullName>Protein AUXIN SIGNALING F-BOX 2</fullName>
    </recommendedName>
</protein>
<sequence length="575" mass="64605">MNYFPDEVIEHVFDFVTSHKDRNAISLVCKSWYKIERYSRQKVFIGNCYAINPERLLRRFPCLKSLTLKGKPHFADFNLVPHEWGGFVLPWIEALARSRVGLEELRLKRMVVTDESLELLSRSFVNFKSLVLVSCEGFTTDGLASIAANCRHLRDLDLQENEIDDHRGQWLSCFPDTCTTLVTLNFACLEGETNLVALERLVARSPNLKSLKLNRAVPLDALARLMACAPQIVDLGVGSYENDPDSESYLKLMAVIKKCTSLRSLSGFLEAAPHCLSAFHPICHNLTSLNLSYAAEIHGSHLIKLIQHCKKLQRLWILDSIGDKGLEVVASTCKELQELRVFPSDLLGGGNTAVTEEGLVAISAGCPKLHSILYFCQQMTNAALVTVAKNCPNFIRFRLCILEPNKPDHVTSQPLDEGFGAIVKACKSLRRLSLSGLLTDQVFLYIGMYANQLEMLSIAFAGDTDKGMLYVLNGCKKMKKLEIRDSPFGDTALLADVSKYETMRSLWMSSCEVTLSGCKRLAEKAPWLNVEIINENDNNRMEENGHEGRQKVDKLYLYRTVVGTRMDAPPFVWIL</sequence>
<dbReference type="EMBL" id="AB016889">
    <property type="protein sequence ID" value="BAB01228.1"/>
    <property type="molecule type" value="Genomic_DNA"/>
</dbReference>
<dbReference type="EMBL" id="CP002686">
    <property type="protein sequence ID" value="AEE77218.1"/>
    <property type="molecule type" value="Genomic_DNA"/>
</dbReference>
<dbReference type="EMBL" id="AY062568">
    <property type="protein sequence ID" value="AAL32646.1"/>
    <property type="molecule type" value="mRNA"/>
</dbReference>
<dbReference type="EMBL" id="BT010396">
    <property type="protein sequence ID" value="AAQ56839.1"/>
    <property type="molecule type" value="mRNA"/>
</dbReference>
<dbReference type="RefSeq" id="NP_566800.1">
    <property type="nucleotide sequence ID" value="NM_113593.3"/>
</dbReference>
<dbReference type="SMR" id="Q9LW29"/>
<dbReference type="BioGRID" id="7626">
    <property type="interactions" value="13"/>
</dbReference>
<dbReference type="DIP" id="DIP-34608N"/>
<dbReference type="FunCoup" id="Q9LW29">
    <property type="interactions" value="414"/>
</dbReference>
<dbReference type="IntAct" id="Q9LW29">
    <property type="interactions" value="5"/>
</dbReference>
<dbReference type="STRING" id="3702.Q9LW29"/>
<dbReference type="PaxDb" id="3702-AT3G26810.1"/>
<dbReference type="ProteomicsDB" id="244687"/>
<dbReference type="EnsemblPlants" id="AT3G26810.1">
    <property type="protein sequence ID" value="AT3G26810.1"/>
    <property type="gene ID" value="AT3G26810"/>
</dbReference>
<dbReference type="GeneID" id="822296"/>
<dbReference type="Gramene" id="AT3G26810.1">
    <property type="protein sequence ID" value="AT3G26810.1"/>
    <property type="gene ID" value="AT3G26810"/>
</dbReference>
<dbReference type="KEGG" id="ath:AT3G26810"/>
<dbReference type="Araport" id="AT3G26810"/>
<dbReference type="TAIR" id="AT3G26810">
    <property type="gene designation" value="AFB2"/>
</dbReference>
<dbReference type="eggNOG" id="KOG1947">
    <property type="taxonomic scope" value="Eukaryota"/>
</dbReference>
<dbReference type="HOGENOM" id="CLU_022456_1_0_1"/>
<dbReference type="InParanoid" id="Q9LW29"/>
<dbReference type="OMA" id="DWGGYVY"/>
<dbReference type="PhylomeDB" id="Q9LW29"/>
<dbReference type="UniPathway" id="UPA00143"/>
<dbReference type="PRO" id="PR:Q9LW29"/>
<dbReference type="Proteomes" id="UP000006548">
    <property type="component" value="Chromosome 3"/>
</dbReference>
<dbReference type="ExpressionAtlas" id="Q9LW29">
    <property type="expression patterns" value="baseline and differential"/>
</dbReference>
<dbReference type="GO" id="GO:0005634">
    <property type="term" value="C:nucleus"/>
    <property type="evidence" value="ECO:0007669"/>
    <property type="project" value="UniProtKB-SubCell"/>
</dbReference>
<dbReference type="GO" id="GO:0000325">
    <property type="term" value="C:plant-type vacuole"/>
    <property type="evidence" value="ECO:0007005"/>
    <property type="project" value="TAIR"/>
</dbReference>
<dbReference type="GO" id="GO:0019005">
    <property type="term" value="C:SCF ubiquitin ligase complex"/>
    <property type="evidence" value="ECO:0000250"/>
    <property type="project" value="UniProtKB"/>
</dbReference>
<dbReference type="GO" id="GO:0010011">
    <property type="term" value="F:auxin binding"/>
    <property type="evidence" value="ECO:0000316"/>
    <property type="project" value="TAIR"/>
</dbReference>
<dbReference type="GO" id="GO:0000822">
    <property type="term" value="F:inositol hexakisphosphate binding"/>
    <property type="evidence" value="ECO:0000250"/>
    <property type="project" value="UniProtKB"/>
</dbReference>
<dbReference type="GO" id="GO:0009734">
    <property type="term" value="P:auxin-activated signaling pathway"/>
    <property type="evidence" value="ECO:0000315"/>
    <property type="project" value="TAIR"/>
</dbReference>
<dbReference type="GO" id="GO:0006952">
    <property type="term" value="P:defense response"/>
    <property type="evidence" value="ECO:0007669"/>
    <property type="project" value="UniProtKB-KW"/>
</dbReference>
<dbReference type="GO" id="GO:0010152">
    <property type="term" value="P:pollen maturation"/>
    <property type="evidence" value="ECO:0000316"/>
    <property type="project" value="TAIR"/>
</dbReference>
<dbReference type="GO" id="GO:0016567">
    <property type="term" value="P:protein ubiquitination"/>
    <property type="evidence" value="ECO:0007669"/>
    <property type="project" value="UniProtKB-UniPathway"/>
</dbReference>
<dbReference type="GO" id="GO:0048443">
    <property type="term" value="P:stamen development"/>
    <property type="evidence" value="ECO:0000316"/>
    <property type="project" value="TAIR"/>
</dbReference>
<dbReference type="CDD" id="cd22159">
    <property type="entry name" value="F-box_AtTIR1-like"/>
    <property type="match status" value="1"/>
</dbReference>
<dbReference type="FunFam" id="1.20.1280.50:FF:000006">
    <property type="entry name" value="Transport inhibitor response 1"/>
    <property type="match status" value="1"/>
</dbReference>
<dbReference type="FunFam" id="3.80.10.10:FF:000029">
    <property type="entry name" value="Transport inhibitor response 1"/>
    <property type="match status" value="1"/>
</dbReference>
<dbReference type="Gene3D" id="1.20.1280.50">
    <property type="match status" value="1"/>
</dbReference>
<dbReference type="Gene3D" id="3.80.10.10">
    <property type="entry name" value="Ribonuclease Inhibitor"/>
    <property type="match status" value="1"/>
</dbReference>
<dbReference type="InterPro" id="IPR041567">
    <property type="entry name" value="COI1_F-box"/>
</dbReference>
<dbReference type="InterPro" id="IPR001810">
    <property type="entry name" value="F-box_dom"/>
</dbReference>
<dbReference type="InterPro" id="IPR001611">
    <property type="entry name" value="Leu-rich_rpt"/>
</dbReference>
<dbReference type="InterPro" id="IPR006553">
    <property type="entry name" value="Leu-rich_rpt_Cys-con_subtyp"/>
</dbReference>
<dbReference type="InterPro" id="IPR032675">
    <property type="entry name" value="LRR_dom_sf"/>
</dbReference>
<dbReference type="InterPro" id="IPR041101">
    <property type="entry name" value="Transp_inhibit"/>
</dbReference>
<dbReference type="PANTHER" id="PTHR16134">
    <property type="entry name" value="F-BOX/TPR REPEAT PROTEIN POF3"/>
    <property type="match status" value="1"/>
</dbReference>
<dbReference type="PANTHER" id="PTHR16134:SF132">
    <property type="entry name" value="PROTEIN AUXIN SIGNALING F-BOX 2"/>
    <property type="match status" value="1"/>
</dbReference>
<dbReference type="Pfam" id="PF18511">
    <property type="entry name" value="F-box_5"/>
    <property type="match status" value="1"/>
</dbReference>
<dbReference type="Pfam" id="PF13516">
    <property type="entry name" value="LRR_6"/>
    <property type="match status" value="1"/>
</dbReference>
<dbReference type="Pfam" id="PF18791">
    <property type="entry name" value="Transp_inhibit"/>
    <property type="match status" value="1"/>
</dbReference>
<dbReference type="SMART" id="SM00256">
    <property type="entry name" value="FBOX"/>
    <property type="match status" value="1"/>
</dbReference>
<dbReference type="SMART" id="SM00367">
    <property type="entry name" value="LRR_CC"/>
    <property type="match status" value="7"/>
</dbReference>
<dbReference type="SUPFAM" id="SSF52047">
    <property type="entry name" value="RNI-like"/>
    <property type="match status" value="1"/>
</dbReference>
<reference key="1">
    <citation type="journal article" date="2000" name="DNA Res.">
        <title>Structural analysis of Arabidopsis thaliana chromosome 3. I. Sequence features of the regions of 4,504,864 bp covered by sixty P1 and TAC clones.</title>
        <authorList>
            <person name="Sato S."/>
            <person name="Nakamura Y."/>
            <person name="Kaneko T."/>
            <person name="Katoh T."/>
            <person name="Asamizu E."/>
            <person name="Tabata S."/>
        </authorList>
    </citation>
    <scope>NUCLEOTIDE SEQUENCE [LARGE SCALE GENOMIC DNA]</scope>
    <source>
        <strain>cv. Columbia</strain>
    </source>
</reference>
<reference key="2">
    <citation type="journal article" date="2017" name="Plant J.">
        <title>Araport11: a complete reannotation of the Arabidopsis thaliana reference genome.</title>
        <authorList>
            <person name="Cheng C.Y."/>
            <person name="Krishnakumar V."/>
            <person name="Chan A.P."/>
            <person name="Thibaud-Nissen F."/>
            <person name="Schobel S."/>
            <person name="Town C.D."/>
        </authorList>
    </citation>
    <scope>GENOME REANNOTATION</scope>
    <source>
        <strain>cv. Columbia</strain>
    </source>
</reference>
<reference key="3">
    <citation type="journal article" date="2003" name="Science">
        <title>Empirical analysis of transcriptional activity in the Arabidopsis genome.</title>
        <authorList>
            <person name="Yamada K."/>
            <person name="Lim J."/>
            <person name="Dale J.M."/>
            <person name="Chen H."/>
            <person name="Shinn P."/>
            <person name="Palm C.J."/>
            <person name="Southwick A.M."/>
            <person name="Wu H.C."/>
            <person name="Kim C.J."/>
            <person name="Nguyen M."/>
            <person name="Pham P.K."/>
            <person name="Cheuk R.F."/>
            <person name="Karlin-Newmann G."/>
            <person name="Liu S.X."/>
            <person name="Lam B."/>
            <person name="Sakano H."/>
            <person name="Wu T."/>
            <person name="Yu G."/>
            <person name="Miranda M."/>
            <person name="Quach H.L."/>
            <person name="Tripp M."/>
            <person name="Chang C.H."/>
            <person name="Lee J.M."/>
            <person name="Toriumi M.J."/>
            <person name="Chan M.M."/>
            <person name="Tang C.C."/>
            <person name="Onodera C.S."/>
            <person name="Deng J.M."/>
            <person name="Akiyama K."/>
            <person name="Ansari Y."/>
            <person name="Arakawa T."/>
            <person name="Banh J."/>
            <person name="Banno F."/>
            <person name="Bowser L."/>
            <person name="Brooks S.Y."/>
            <person name="Carninci P."/>
            <person name="Chao Q."/>
            <person name="Choy N."/>
            <person name="Enju A."/>
            <person name="Goldsmith A.D."/>
            <person name="Gurjal M."/>
            <person name="Hansen N.F."/>
            <person name="Hayashizaki Y."/>
            <person name="Johnson-Hopson C."/>
            <person name="Hsuan V.W."/>
            <person name="Iida K."/>
            <person name="Karnes M."/>
            <person name="Khan S."/>
            <person name="Koesema E."/>
            <person name="Ishida J."/>
            <person name="Jiang P.X."/>
            <person name="Jones T."/>
            <person name="Kawai J."/>
            <person name="Kamiya A."/>
            <person name="Meyers C."/>
            <person name="Nakajima M."/>
            <person name="Narusaka M."/>
            <person name="Seki M."/>
            <person name="Sakurai T."/>
            <person name="Satou M."/>
            <person name="Tamse R."/>
            <person name="Vaysberg M."/>
            <person name="Wallender E.K."/>
            <person name="Wong C."/>
            <person name="Yamamura Y."/>
            <person name="Yuan S."/>
            <person name="Shinozaki K."/>
            <person name="Davis R.W."/>
            <person name="Theologis A."/>
            <person name="Ecker J.R."/>
        </authorList>
    </citation>
    <scope>NUCLEOTIDE SEQUENCE [LARGE SCALE MRNA]</scope>
    <source>
        <strain>cv. Columbia</strain>
    </source>
</reference>
<reference key="4">
    <citation type="journal article" date="2002" name="Plant Mol. Biol.">
        <title>Cloning by pathway activation in yeast: identification of an Arabidopsis thaliana F-box protein that can turn on glucose repression.</title>
        <authorList>
            <person name="Thelander M."/>
            <person name="Fredriksson D."/>
            <person name="Schouten J."/>
            <person name="Hoge J.H.C."/>
            <person name="Ronne H."/>
        </authorList>
    </citation>
    <scope>LEUCINE-RICH REPEATS</scope>
</reference>
<reference key="5">
    <citation type="journal article" date="2005" name="Dev. Cell">
        <title>Plant development is regulated by a family of auxin receptor F box proteins.</title>
        <authorList>
            <person name="Dharmasiri N."/>
            <person name="Dharmasiri S."/>
            <person name="Weijers D."/>
            <person name="Lechner E."/>
            <person name="Yamada M."/>
            <person name="Hobbie L."/>
            <person name="Ehrismann J.S."/>
            <person name="Juergens G."/>
            <person name="Estelle M."/>
        </authorList>
    </citation>
    <scope>FUNCTION</scope>
    <scope>TISSUE SPECIFICITY</scope>
    <scope>SUBCELLULAR LOCATION</scope>
    <scope>INTERACTION WITH IAA7</scope>
</reference>
<reference key="6">
    <citation type="journal article" date="2005" name="Nature">
        <title>The F-box protein TIR1 is an auxin receptor.</title>
        <authorList>
            <person name="Dharmasiri N."/>
            <person name="Dharmasiri S."/>
            <person name="Estelle M."/>
        </authorList>
    </citation>
    <scope>FUNCTION</scope>
</reference>
<reference key="7">
    <citation type="journal article" date="2006" name="Science">
        <title>A plant miRNA contributes to antibacterial resistance by repressing auxin signaling.</title>
        <authorList>
            <person name="Navarro L."/>
            <person name="Dunoyer P."/>
            <person name="Jay F."/>
            <person name="Arnold B."/>
            <person name="Dharmasiri N."/>
            <person name="Estelle M."/>
            <person name="Voinnet O."/>
            <person name="Jones J.D.G."/>
        </authorList>
    </citation>
    <scope>FUNCTION</scope>
    <scope>INDUCTION</scope>
</reference>